<proteinExistence type="inferred from homology"/>
<organism>
    <name type="scientific">Phocaeicola vulgatus (strain ATCC 8482 / DSM 1447 / JCM 5826 / CCUG 4940 / NBRC 14291 / NCTC 11154)</name>
    <name type="common">Bacteroides vulgatus</name>
    <dbReference type="NCBI Taxonomy" id="435590"/>
    <lineage>
        <taxon>Bacteria</taxon>
        <taxon>Pseudomonadati</taxon>
        <taxon>Bacteroidota</taxon>
        <taxon>Bacteroidia</taxon>
        <taxon>Bacteroidales</taxon>
        <taxon>Bacteroidaceae</taxon>
        <taxon>Phocaeicola</taxon>
    </lineage>
</organism>
<keyword id="KW-0050">Antiport</keyword>
<keyword id="KW-0997">Cell inner membrane</keyword>
<keyword id="KW-1003">Cell membrane</keyword>
<keyword id="KW-0406">Ion transport</keyword>
<keyword id="KW-0472">Membrane</keyword>
<keyword id="KW-0915">Sodium</keyword>
<keyword id="KW-0739">Sodium transport</keyword>
<keyword id="KW-0812">Transmembrane</keyword>
<keyword id="KW-1133">Transmembrane helix</keyword>
<keyword id="KW-0813">Transport</keyword>
<gene>
    <name evidence="1" type="primary">nhaA</name>
    <name type="ordered locus">BVU_3904</name>
</gene>
<name>NHAA_PHOV8</name>
<evidence type="ECO:0000255" key="1">
    <source>
        <dbReference type="HAMAP-Rule" id="MF_01844"/>
    </source>
</evidence>
<comment type="function">
    <text evidence="1">Na(+)/H(+) antiporter that extrudes sodium in exchange for external protons.</text>
</comment>
<comment type="catalytic activity">
    <reaction evidence="1">
        <text>Na(+)(in) + 2 H(+)(out) = Na(+)(out) + 2 H(+)(in)</text>
        <dbReference type="Rhea" id="RHEA:29251"/>
        <dbReference type="ChEBI" id="CHEBI:15378"/>
        <dbReference type="ChEBI" id="CHEBI:29101"/>
    </reaction>
    <physiologicalReaction direction="left-to-right" evidence="1">
        <dbReference type="Rhea" id="RHEA:29252"/>
    </physiologicalReaction>
</comment>
<comment type="subcellular location">
    <subcellularLocation>
        <location evidence="1">Cell inner membrane</location>
        <topology evidence="1">Multi-pass membrane protein</topology>
    </subcellularLocation>
</comment>
<comment type="similarity">
    <text evidence="1">Belongs to the NhaA Na(+)/H(+) (TC 2.A.33) antiporter family.</text>
</comment>
<sequence>MEKLKILNLNFSFQRAAHYHINGGMLLMGVVLLAMFLANSPWGDIYASFWNYEVHLQIGEFNFFSHNGHHMTLMTFINDALMAVFFFSVGLEIKREILVGELSSFRQALLPIVAACGGMLVPVLIYYFMTAGTPAQSGLAIPMATDIAFSLGVLSLFGKRVPLSLKVFLTAFAVVDDIGGILVIALFYTSHLSVNYLIASAGILLILCGGNFFRVHNRWFYIFWGVIMWYLFLQSGIHATIAGVVAAFTVPATPHYKIGKYINRIRENIAVFPASDKESVVLSKMQINVLKSIESSSDRVISPLQSLEDSLHGMVNYIILPLFAFANAGVSLTADHGGLEVGMATWAVLAGLLAGKFAGIYFFTWLVIKMGFAGLLKGMTWVNLTGICLLGGIGFTVSLFIANLSFGDSPVLLTQAKMGVILGTVLAGVLAYLVLQFALPKQPAQE</sequence>
<protein>
    <recommendedName>
        <fullName evidence="1">Na(+)/H(+) antiporter NhaA</fullName>
    </recommendedName>
    <alternativeName>
        <fullName evidence="1">Sodium/proton antiporter NhaA</fullName>
    </alternativeName>
</protein>
<reference key="1">
    <citation type="journal article" date="2007" name="PLoS Biol.">
        <title>Evolution of symbiotic bacteria in the distal human intestine.</title>
        <authorList>
            <person name="Xu J."/>
            <person name="Mahowald M.A."/>
            <person name="Ley R.E."/>
            <person name="Lozupone C.A."/>
            <person name="Hamady M."/>
            <person name="Martens E.C."/>
            <person name="Henrissat B."/>
            <person name="Coutinho P.M."/>
            <person name="Minx P."/>
            <person name="Latreille P."/>
            <person name="Cordum H."/>
            <person name="Van Brunt A."/>
            <person name="Kim K."/>
            <person name="Fulton R.S."/>
            <person name="Fulton L.A."/>
            <person name="Clifton S.W."/>
            <person name="Wilson R.K."/>
            <person name="Knight R.D."/>
            <person name="Gordon J.I."/>
        </authorList>
    </citation>
    <scope>NUCLEOTIDE SEQUENCE [LARGE SCALE GENOMIC DNA]</scope>
    <source>
        <strain>ATCC 8482 / DSM 1447 / JCM 5826 / CCUG 4940 / NBRC 14291 / NCTC 11154</strain>
    </source>
</reference>
<dbReference type="EMBL" id="CP000139">
    <property type="protein sequence ID" value="ABR41507.1"/>
    <property type="molecule type" value="Genomic_DNA"/>
</dbReference>
<dbReference type="RefSeq" id="WP_007846505.1">
    <property type="nucleotide sequence ID" value="NZ_CAXVNH010000015.1"/>
</dbReference>
<dbReference type="SMR" id="A6L743"/>
<dbReference type="STRING" id="435590.BVU_3904"/>
<dbReference type="PaxDb" id="435590-BVU_3904"/>
<dbReference type="GeneID" id="5304863"/>
<dbReference type="KEGG" id="bvu:BVU_3904"/>
<dbReference type="eggNOG" id="COG3004">
    <property type="taxonomic scope" value="Bacteria"/>
</dbReference>
<dbReference type="HOGENOM" id="CLU_015803_1_2_10"/>
<dbReference type="BioCyc" id="BVUL435590:G1G59-4039-MONOMER"/>
<dbReference type="Proteomes" id="UP000002861">
    <property type="component" value="Chromosome"/>
</dbReference>
<dbReference type="GO" id="GO:0005886">
    <property type="term" value="C:plasma membrane"/>
    <property type="evidence" value="ECO:0007669"/>
    <property type="project" value="UniProtKB-SubCell"/>
</dbReference>
<dbReference type="GO" id="GO:0015385">
    <property type="term" value="F:sodium:proton antiporter activity"/>
    <property type="evidence" value="ECO:0007669"/>
    <property type="project" value="TreeGrafter"/>
</dbReference>
<dbReference type="GO" id="GO:0006885">
    <property type="term" value="P:regulation of pH"/>
    <property type="evidence" value="ECO:0007669"/>
    <property type="project" value="InterPro"/>
</dbReference>
<dbReference type="Gene3D" id="1.20.1530.10">
    <property type="entry name" value="Na+/H+ antiporter like domain"/>
    <property type="match status" value="1"/>
</dbReference>
<dbReference type="HAMAP" id="MF_01844">
    <property type="entry name" value="NhaA"/>
    <property type="match status" value="1"/>
</dbReference>
<dbReference type="InterPro" id="IPR023171">
    <property type="entry name" value="Na/H_antiporter_dom_sf"/>
</dbReference>
<dbReference type="InterPro" id="IPR004670">
    <property type="entry name" value="NhaA"/>
</dbReference>
<dbReference type="NCBIfam" id="TIGR00773">
    <property type="entry name" value="NhaA"/>
    <property type="match status" value="1"/>
</dbReference>
<dbReference type="PANTHER" id="PTHR30341:SF0">
    <property type="entry name" value="NA(+)_H(+) ANTIPORTER NHAA"/>
    <property type="match status" value="1"/>
</dbReference>
<dbReference type="PANTHER" id="PTHR30341">
    <property type="entry name" value="SODIUM ION/PROTON ANTIPORTER NHAA-RELATED"/>
    <property type="match status" value="1"/>
</dbReference>
<dbReference type="Pfam" id="PF06965">
    <property type="entry name" value="Na_H_antiport_1"/>
    <property type="match status" value="1"/>
</dbReference>
<feature type="chain" id="PRO_0000334234" description="Na(+)/H(+) antiporter NhaA">
    <location>
        <begin position="1"/>
        <end position="446"/>
    </location>
</feature>
<feature type="transmembrane region" description="Helical" evidence="1">
    <location>
        <begin position="23"/>
        <end position="43"/>
    </location>
</feature>
<feature type="transmembrane region" description="Helical" evidence="1">
    <location>
        <begin position="73"/>
        <end position="93"/>
    </location>
</feature>
<feature type="transmembrane region" description="Helical" evidence="1">
    <location>
        <begin position="109"/>
        <end position="129"/>
    </location>
</feature>
<feature type="transmembrane region" description="Helical" evidence="1">
    <location>
        <begin position="138"/>
        <end position="158"/>
    </location>
</feature>
<feature type="transmembrane region" description="Helical" evidence="1">
    <location>
        <begin position="167"/>
        <end position="187"/>
    </location>
</feature>
<feature type="transmembrane region" description="Helical" evidence="1">
    <location>
        <begin position="193"/>
        <end position="213"/>
    </location>
</feature>
<feature type="transmembrane region" description="Helical" evidence="1">
    <location>
        <begin position="219"/>
        <end position="239"/>
    </location>
</feature>
<feature type="transmembrane region" description="Helical" evidence="1">
    <location>
        <begin position="314"/>
        <end position="334"/>
    </location>
</feature>
<feature type="transmembrane region" description="Helical" evidence="1">
    <location>
        <begin position="348"/>
        <end position="368"/>
    </location>
</feature>
<feature type="transmembrane region" description="Helical" evidence="1">
    <location>
        <begin position="381"/>
        <end position="401"/>
    </location>
</feature>
<feature type="transmembrane region" description="Helical" evidence="1">
    <location>
        <begin position="419"/>
        <end position="439"/>
    </location>
</feature>
<accession>A6L743</accession>